<reference key="1">
    <citation type="journal article" date="1995" name="Gene">
        <title>Isolation and characterization of the gene encoding xylose reductase from Kluyveromyces lactis.</title>
        <authorList>
            <person name="Billard P."/>
            <person name="Menart S."/>
            <person name="Fleer R."/>
            <person name="Bolotin-Fukuhara M."/>
        </authorList>
    </citation>
    <scope>NUCLEOTIDE SEQUENCE [GENOMIC DNA]</scope>
    <source>
        <strain>ATCC 76492 / CBS 2359/152 / CLIB 210</strain>
    </source>
</reference>
<reference key="2">
    <citation type="journal article" date="2004" name="Nature">
        <title>Genome evolution in yeasts.</title>
        <authorList>
            <person name="Dujon B."/>
            <person name="Sherman D."/>
            <person name="Fischer G."/>
            <person name="Durrens P."/>
            <person name="Casaregola S."/>
            <person name="Lafontaine I."/>
            <person name="de Montigny J."/>
            <person name="Marck C."/>
            <person name="Neuveglise C."/>
            <person name="Talla E."/>
            <person name="Goffard N."/>
            <person name="Frangeul L."/>
            <person name="Aigle M."/>
            <person name="Anthouard V."/>
            <person name="Babour A."/>
            <person name="Barbe V."/>
            <person name="Barnay S."/>
            <person name="Blanchin S."/>
            <person name="Beckerich J.-M."/>
            <person name="Beyne E."/>
            <person name="Bleykasten C."/>
            <person name="Boisrame A."/>
            <person name="Boyer J."/>
            <person name="Cattolico L."/>
            <person name="Confanioleri F."/>
            <person name="de Daruvar A."/>
            <person name="Despons L."/>
            <person name="Fabre E."/>
            <person name="Fairhead C."/>
            <person name="Ferry-Dumazet H."/>
            <person name="Groppi A."/>
            <person name="Hantraye F."/>
            <person name="Hennequin C."/>
            <person name="Jauniaux N."/>
            <person name="Joyet P."/>
            <person name="Kachouri R."/>
            <person name="Kerrest A."/>
            <person name="Koszul R."/>
            <person name="Lemaire M."/>
            <person name="Lesur I."/>
            <person name="Ma L."/>
            <person name="Muller H."/>
            <person name="Nicaud J.-M."/>
            <person name="Nikolski M."/>
            <person name="Oztas S."/>
            <person name="Ozier-Kalogeropoulos O."/>
            <person name="Pellenz S."/>
            <person name="Potier S."/>
            <person name="Richard G.-F."/>
            <person name="Straub M.-L."/>
            <person name="Suleau A."/>
            <person name="Swennen D."/>
            <person name="Tekaia F."/>
            <person name="Wesolowski-Louvel M."/>
            <person name="Westhof E."/>
            <person name="Wirth B."/>
            <person name="Zeniou-Meyer M."/>
            <person name="Zivanovic Y."/>
            <person name="Bolotin-Fukuhara M."/>
            <person name="Thierry A."/>
            <person name="Bouchier C."/>
            <person name="Caudron B."/>
            <person name="Scarpelli C."/>
            <person name="Gaillardin C."/>
            <person name="Weissenbach J."/>
            <person name="Wincker P."/>
            <person name="Souciet J.-L."/>
        </authorList>
    </citation>
    <scope>NUCLEOTIDE SEQUENCE [LARGE SCALE GENOMIC DNA]</scope>
    <source>
        <strain>ATCC 8585 / CBS 2359 / DSM 70799 / NBRC 1267 / NRRL Y-1140 / WM37</strain>
    </source>
</reference>
<keyword id="KW-0119">Carbohydrate metabolism</keyword>
<keyword id="KW-0520">NAD</keyword>
<keyword id="KW-0521">NADP</keyword>
<keyword id="KW-0560">Oxidoreductase</keyword>
<keyword id="KW-1185">Reference proteome</keyword>
<keyword id="KW-0859">Xylose metabolism</keyword>
<feature type="chain" id="PRO_0000124664" description="NAD(P)H-dependent D-xylose reductase">
    <location>
        <begin position="1"/>
        <end position="329"/>
    </location>
</feature>
<feature type="active site" description="Proton donor" evidence="1">
    <location>
        <position position="52"/>
    </location>
</feature>
<feature type="binding site" evidence="1">
    <location>
        <position position="114"/>
    </location>
    <ligand>
        <name>substrate</name>
    </ligand>
</feature>
<feature type="binding site" evidence="1">
    <location>
        <begin position="173"/>
        <end position="174"/>
    </location>
    <ligand>
        <name>NAD(+)</name>
        <dbReference type="ChEBI" id="CHEBI:57540"/>
    </ligand>
</feature>
<feature type="binding site" evidence="1">
    <location>
        <begin position="222"/>
        <end position="231"/>
    </location>
    <ligand>
        <name>NAD(+)</name>
        <dbReference type="ChEBI" id="CHEBI:57540"/>
    </ligand>
</feature>
<feature type="binding site" evidence="1">
    <location>
        <begin position="278"/>
        <end position="288"/>
    </location>
    <ligand>
        <name>NAD(+)</name>
        <dbReference type="ChEBI" id="CHEBI:57540"/>
    </ligand>
</feature>
<feature type="site" description="Lowers pKa of active site Tyr" evidence="1">
    <location>
        <position position="81"/>
    </location>
</feature>
<proteinExistence type="inferred from homology"/>
<comment type="function">
    <text>Reduces D-xylose into xylitol.</text>
</comment>
<comment type="catalytic activity">
    <reaction>
        <text>xylitol + NAD(+) = D-xylose + NADH + H(+)</text>
        <dbReference type="Rhea" id="RHEA:27441"/>
        <dbReference type="ChEBI" id="CHEBI:15378"/>
        <dbReference type="ChEBI" id="CHEBI:17151"/>
        <dbReference type="ChEBI" id="CHEBI:53455"/>
        <dbReference type="ChEBI" id="CHEBI:57540"/>
        <dbReference type="ChEBI" id="CHEBI:57945"/>
        <dbReference type="EC" id="1.1.1.307"/>
    </reaction>
</comment>
<comment type="catalytic activity">
    <reaction>
        <text>xylitol + NADP(+) = D-xylose + NADPH + H(+)</text>
        <dbReference type="Rhea" id="RHEA:27445"/>
        <dbReference type="ChEBI" id="CHEBI:15378"/>
        <dbReference type="ChEBI" id="CHEBI:17151"/>
        <dbReference type="ChEBI" id="CHEBI:53455"/>
        <dbReference type="ChEBI" id="CHEBI:57783"/>
        <dbReference type="ChEBI" id="CHEBI:58349"/>
        <dbReference type="EC" id="1.1.1.307"/>
    </reaction>
</comment>
<comment type="pathway">
    <text>Carbohydrate metabolism; D-xylose degradation.</text>
</comment>
<comment type="similarity">
    <text evidence="2">Belongs to the aldo/keto reductase family.</text>
</comment>
<evidence type="ECO:0000250" key="1"/>
<evidence type="ECO:0000305" key="2"/>
<organism>
    <name type="scientific">Kluyveromyces lactis (strain ATCC 8585 / CBS 2359 / DSM 70799 / NBRC 1267 / NRRL Y-1140 / WM37)</name>
    <name type="common">Yeast</name>
    <name type="synonym">Candida sphaerica</name>
    <dbReference type="NCBI Taxonomy" id="284590"/>
    <lineage>
        <taxon>Eukaryota</taxon>
        <taxon>Fungi</taxon>
        <taxon>Dikarya</taxon>
        <taxon>Ascomycota</taxon>
        <taxon>Saccharomycotina</taxon>
        <taxon>Saccharomycetes</taxon>
        <taxon>Saccharomycetales</taxon>
        <taxon>Saccharomycetaceae</taxon>
        <taxon>Kluyveromyces</taxon>
    </lineage>
</organism>
<gene>
    <name type="primary">XYL1</name>
    <name type="ordered locus">KLLA0E21714g</name>
</gene>
<accession>P49378</accession>
<sequence>MTYLAETVTLNNGEKMPLVGLGCWKMPNDVCADQIYEAIKIGYRLFDGAQDYANEKEVGQGVNRAIKEGLVKREDLVVVSKLWNSFHHPDNVPRALERTLSDLQLDYVDIFYIHFPLAFKPVPFDEKYPPGFYTGKEDEAKGHIEEEQVPLLDTWRALEKLVDQGKIKSLGISNFSGALIQDLLRGARIKPVALQIEHHPYLTQERLIKYVKNAGIQVVAYSSFGPVSFLELENKKALNTPTLFEHDTIKSIASKHKVTPQQVLLRWATQNGIAIIPKSSKKERLLDNLRINDALTLTDDELKQISGLNQNIRFNDPWEWLDNEFPTFI</sequence>
<name>XYL1_KLULA</name>
<dbReference type="EC" id="1.1.1.307"/>
<dbReference type="EMBL" id="L36993">
    <property type="protein sequence ID" value="AAA99507.1"/>
    <property type="molecule type" value="Genomic_DNA"/>
</dbReference>
<dbReference type="EMBL" id="CR382125">
    <property type="protein sequence ID" value="CAH00016.1"/>
    <property type="molecule type" value="Genomic_DNA"/>
</dbReference>
<dbReference type="PIR" id="JC4251">
    <property type="entry name" value="JC4251"/>
</dbReference>
<dbReference type="RefSeq" id="XP_454929.1">
    <property type="nucleotide sequence ID" value="XM_454929.1"/>
</dbReference>
<dbReference type="SMR" id="P49378"/>
<dbReference type="FunCoup" id="P49378">
    <property type="interactions" value="422"/>
</dbReference>
<dbReference type="STRING" id="284590.P49378"/>
<dbReference type="PaxDb" id="284590-P49378"/>
<dbReference type="KEGG" id="kla:KLLA0_E21627g"/>
<dbReference type="eggNOG" id="KOG1577">
    <property type="taxonomic scope" value="Eukaryota"/>
</dbReference>
<dbReference type="HOGENOM" id="CLU_023205_0_0_1"/>
<dbReference type="InParanoid" id="P49378"/>
<dbReference type="OMA" id="VHWPSEG"/>
<dbReference type="UniPathway" id="UPA00810"/>
<dbReference type="Proteomes" id="UP000000598">
    <property type="component" value="Chromosome E"/>
</dbReference>
<dbReference type="GO" id="GO:0032866">
    <property type="term" value="F:D-xylose reductase (NADPH) activity"/>
    <property type="evidence" value="ECO:0007669"/>
    <property type="project" value="InterPro"/>
</dbReference>
<dbReference type="GO" id="GO:0042843">
    <property type="term" value="P:D-xylose catabolic process"/>
    <property type="evidence" value="ECO:0007669"/>
    <property type="project" value="UniProtKB-UniPathway"/>
</dbReference>
<dbReference type="CDD" id="cd19113">
    <property type="entry name" value="AKR_AKR2B1-10"/>
    <property type="match status" value="1"/>
</dbReference>
<dbReference type="FunFam" id="3.20.20.100:FF:000007">
    <property type="entry name" value="NAD(P)H-dependent D-xylose reductase xyl1"/>
    <property type="match status" value="1"/>
</dbReference>
<dbReference type="Gene3D" id="3.20.20.100">
    <property type="entry name" value="NADP-dependent oxidoreductase domain"/>
    <property type="match status" value="1"/>
</dbReference>
<dbReference type="InterPro" id="IPR020471">
    <property type="entry name" value="AKR"/>
</dbReference>
<dbReference type="InterPro" id="IPR044486">
    <property type="entry name" value="AKR2B1"/>
</dbReference>
<dbReference type="InterPro" id="IPR018170">
    <property type="entry name" value="Aldo/ket_reductase_CS"/>
</dbReference>
<dbReference type="InterPro" id="IPR023210">
    <property type="entry name" value="NADP_OxRdtase_dom"/>
</dbReference>
<dbReference type="InterPro" id="IPR036812">
    <property type="entry name" value="NADP_OxRdtase_dom_sf"/>
</dbReference>
<dbReference type="PANTHER" id="PTHR11732">
    <property type="entry name" value="ALDO/KETO REDUCTASE"/>
    <property type="match status" value="1"/>
</dbReference>
<dbReference type="Pfam" id="PF00248">
    <property type="entry name" value="Aldo_ket_red"/>
    <property type="match status" value="1"/>
</dbReference>
<dbReference type="PIRSF" id="PIRSF000097">
    <property type="entry name" value="AKR"/>
    <property type="match status" value="1"/>
</dbReference>
<dbReference type="PRINTS" id="PR00069">
    <property type="entry name" value="ALDKETRDTASE"/>
</dbReference>
<dbReference type="SUPFAM" id="SSF51430">
    <property type="entry name" value="NAD(P)-linked oxidoreductase"/>
    <property type="match status" value="1"/>
</dbReference>
<dbReference type="PROSITE" id="PS00798">
    <property type="entry name" value="ALDOKETO_REDUCTASE_1"/>
    <property type="match status" value="1"/>
</dbReference>
<dbReference type="PROSITE" id="PS00062">
    <property type="entry name" value="ALDOKETO_REDUCTASE_2"/>
    <property type="match status" value="1"/>
</dbReference>
<protein>
    <recommendedName>
        <fullName>NAD(P)H-dependent D-xylose reductase</fullName>
        <shortName>XR</shortName>
        <ecNumber>1.1.1.307</ecNumber>
    </recommendedName>
</protein>